<feature type="chain" id="PRO_0000152354" description="Imidazole glycerol phosphate synthase subunit HisH">
    <location>
        <begin position="1"/>
        <end position="196"/>
    </location>
</feature>
<feature type="domain" description="Glutamine amidotransferase type-1">
    <location>
        <begin position="2"/>
        <end position="196"/>
    </location>
</feature>
<feature type="active site" description="Nucleophile" evidence="1">
    <location>
        <position position="77"/>
    </location>
</feature>
<feature type="active site" evidence="1">
    <location>
        <position position="178"/>
    </location>
</feature>
<feature type="active site" evidence="1">
    <location>
        <position position="180"/>
    </location>
</feature>
<organism>
    <name type="scientific">Buchnera aphidicola subsp. Acyrthosiphon pisum (strain APS)</name>
    <name type="common">Acyrthosiphon pisum symbiotic bacterium</name>
    <dbReference type="NCBI Taxonomy" id="107806"/>
    <lineage>
        <taxon>Bacteria</taxon>
        <taxon>Pseudomonadati</taxon>
        <taxon>Pseudomonadota</taxon>
        <taxon>Gammaproteobacteria</taxon>
        <taxon>Enterobacterales</taxon>
        <taxon>Erwiniaceae</taxon>
        <taxon>Buchnera</taxon>
    </lineage>
</organism>
<protein>
    <recommendedName>
        <fullName>Imidazole glycerol phosphate synthase subunit HisH</fullName>
        <ecNumber>4.3.2.10</ecNumber>
    </recommendedName>
    <alternativeName>
        <fullName>IGP synthase glutaminase subunit</fullName>
        <ecNumber>3.5.1.2</ecNumber>
    </alternativeName>
    <alternativeName>
        <fullName>IGP synthase subunit HisH</fullName>
    </alternativeName>
    <alternativeName>
        <fullName>ImGP synthase subunit HisH</fullName>
        <shortName>IGPS subunit HisH</shortName>
    </alternativeName>
</protein>
<gene>
    <name type="primary">hisH</name>
    <name type="ordered locus">BU103</name>
</gene>
<name>HIS5_BUCAI</name>
<sequence length="196" mass="21679">MYIVIVDTGCANLTSIKVAINNLGYNATITSESSIILKSNKIFLPGVGTASAVMDLLSKKKIINVIRECKQTILGICLGMQLFCASSEESNGVKTIGIIKTPALRLKVNNLSLPHIGWNQITFQKGHALFKNIPNNSRFYFVHSYMVPINKYTLSTTNYGINFSSIIQKDNFFGVQFHPEKSGNIGSQLLKNFLEI</sequence>
<evidence type="ECO:0000250" key="1"/>
<comment type="function">
    <text evidence="1">IGPS catalyzes the conversion of PRFAR and glutamine to IGP, AICAR and glutamate. The HisH subunit catalyzes the hydrolysis of glutamine to glutamate and ammonia as part of the synthesis of IGP and AICAR. The resulting ammonia molecule is channeled to the active site of HisF (By similarity).</text>
</comment>
<comment type="catalytic activity">
    <reaction>
        <text>5-[(5-phospho-1-deoxy-D-ribulos-1-ylimino)methylamino]-1-(5-phospho-beta-D-ribosyl)imidazole-4-carboxamide + L-glutamine = D-erythro-1-(imidazol-4-yl)glycerol 3-phosphate + 5-amino-1-(5-phospho-beta-D-ribosyl)imidazole-4-carboxamide + L-glutamate + H(+)</text>
        <dbReference type="Rhea" id="RHEA:24793"/>
        <dbReference type="ChEBI" id="CHEBI:15378"/>
        <dbReference type="ChEBI" id="CHEBI:29985"/>
        <dbReference type="ChEBI" id="CHEBI:58278"/>
        <dbReference type="ChEBI" id="CHEBI:58359"/>
        <dbReference type="ChEBI" id="CHEBI:58475"/>
        <dbReference type="ChEBI" id="CHEBI:58525"/>
        <dbReference type="EC" id="4.3.2.10"/>
    </reaction>
</comment>
<comment type="catalytic activity">
    <reaction>
        <text>L-glutamine + H2O = L-glutamate + NH4(+)</text>
        <dbReference type="Rhea" id="RHEA:15889"/>
        <dbReference type="ChEBI" id="CHEBI:15377"/>
        <dbReference type="ChEBI" id="CHEBI:28938"/>
        <dbReference type="ChEBI" id="CHEBI:29985"/>
        <dbReference type="ChEBI" id="CHEBI:58359"/>
        <dbReference type="EC" id="3.5.1.2"/>
    </reaction>
</comment>
<comment type="pathway">
    <text>Amino-acid biosynthesis; L-histidine biosynthesis; L-histidine from 5-phospho-alpha-D-ribose 1-diphosphate: step 5/9.</text>
</comment>
<comment type="subunit">
    <text evidence="1">Heterodimer of HisH and HisF.</text>
</comment>
<comment type="subcellular location">
    <subcellularLocation>
        <location evidence="1">Cytoplasm</location>
    </subcellularLocation>
</comment>
<accession>P57204</accession>
<dbReference type="EC" id="4.3.2.10"/>
<dbReference type="EC" id="3.5.1.2"/>
<dbReference type="EMBL" id="BA000003">
    <property type="protein sequence ID" value="BAB12822.1"/>
    <property type="molecule type" value="Genomic_DNA"/>
</dbReference>
<dbReference type="RefSeq" id="NP_239936.1">
    <property type="nucleotide sequence ID" value="NC_002528.1"/>
</dbReference>
<dbReference type="RefSeq" id="WP_010895945.1">
    <property type="nucleotide sequence ID" value="NC_002528.1"/>
</dbReference>
<dbReference type="SMR" id="P57204"/>
<dbReference type="STRING" id="563178.BUAP5A_101"/>
<dbReference type="MEROPS" id="C26.965"/>
<dbReference type="EnsemblBacteria" id="BAB12822">
    <property type="protein sequence ID" value="BAB12822"/>
    <property type="gene ID" value="BAB12822"/>
</dbReference>
<dbReference type="KEGG" id="buc:BU103"/>
<dbReference type="PATRIC" id="fig|107806.10.peg.111"/>
<dbReference type="eggNOG" id="COG0118">
    <property type="taxonomic scope" value="Bacteria"/>
</dbReference>
<dbReference type="HOGENOM" id="CLU_071837_0_0_6"/>
<dbReference type="UniPathway" id="UPA00031">
    <property type="reaction ID" value="UER00010"/>
</dbReference>
<dbReference type="Proteomes" id="UP000001806">
    <property type="component" value="Chromosome"/>
</dbReference>
<dbReference type="GO" id="GO:0005737">
    <property type="term" value="C:cytoplasm"/>
    <property type="evidence" value="ECO:0007669"/>
    <property type="project" value="UniProtKB-SubCell"/>
</dbReference>
<dbReference type="GO" id="GO:0004359">
    <property type="term" value="F:glutaminase activity"/>
    <property type="evidence" value="ECO:0007669"/>
    <property type="project" value="UniProtKB-EC"/>
</dbReference>
<dbReference type="GO" id="GO:0000107">
    <property type="term" value="F:imidazoleglycerol-phosphate synthase activity"/>
    <property type="evidence" value="ECO:0007669"/>
    <property type="project" value="UniProtKB-UniRule"/>
</dbReference>
<dbReference type="GO" id="GO:0016829">
    <property type="term" value="F:lyase activity"/>
    <property type="evidence" value="ECO:0007669"/>
    <property type="project" value="UniProtKB-KW"/>
</dbReference>
<dbReference type="GO" id="GO:0000105">
    <property type="term" value="P:L-histidine biosynthetic process"/>
    <property type="evidence" value="ECO:0007669"/>
    <property type="project" value="UniProtKB-UniRule"/>
</dbReference>
<dbReference type="CDD" id="cd01748">
    <property type="entry name" value="GATase1_IGP_Synthase"/>
    <property type="match status" value="1"/>
</dbReference>
<dbReference type="FunFam" id="3.40.50.880:FF:000009">
    <property type="entry name" value="Imidazole glycerol phosphate synthase subunit HisH"/>
    <property type="match status" value="1"/>
</dbReference>
<dbReference type="Gene3D" id="3.40.50.880">
    <property type="match status" value="1"/>
</dbReference>
<dbReference type="HAMAP" id="MF_00278">
    <property type="entry name" value="HisH"/>
    <property type="match status" value="1"/>
</dbReference>
<dbReference type="InterPro" id="IPR029062">
    <property type="entry name" value="Class_I_gatase-like"/>
</dbReference>
<dbReference type="InterPro" id="IPR017926">
    <property type="entry name" value="GATASE"/>
</dbReference>
<dbReference type="InterPro" id="IPR010139">
    <property type="entry name" value="Imidazole-glycPsynth_HisH"/>
</dbReference>
<dbReference type="NCBIfam" id="TIGR01855">
    <property type="entry name" value="IMP_synth_hisH"/>
    <property type="match status" value="1"/>
</dbReference>
<dbReference type="PANTHER" id="PTHR42701">
    <property type="entry name" value="IMIDAZOLE GLYCEROL PHOSPHATE SYNTHASE SUBUNIT HISH"/>
    <property type="match status" value="1"/>
</dbReference>
<dbReference type="PANTHER" id="PTHR42701:SF1">
    <property type="entry name" value="IMIDAZOLE GLYCEROL PHOSPHATE SYNTHASE SUBUNIT HISH"/>
    <property type="match status" value="1"/>
</dbReference>
<dbReference type="Pfam" id="PF00117">
    <property type="entry name" value="GATase"/>
    <property type="match status" value="1"/>
</dbReference>
<dbReference type="PIRSF" id="PIRSF000495">
    <property type="entry name" value="Amidotransf_hisH"/>
    <property type="match status" value="1"/>
</dbReference>
<dbReference type="SUPFAM" id="SSF52317">
    <property type="entry name" value="Class I glutamine amidotransferase-like"/>
    <property type="match status" value="1"/>
</dbReference>
<dbReference type="PROSITE" id="PS51273">
    <property type="entry name" value="GATASE_TYPE_1"/>
    <property type="match status" value="1"/>
</dbReference>
<reference key="1">
    <citation type="journal article" date="2000" name="Nature">
        <title>Genome sequence of the endocellular bacterial symbiont of aphids Buchnera sp. APS.</title>
        <authorList>
            <person name="Shigenobu S."/>
            <person name="Watanabe H."/>
            <person name="Hattori M."/>
            <person name="Sakaki Y."/>
            <person name="Ishikawa H."/>
        </authorList>
    </citation>
    <scope>NUCLEOTIDE SEQUENCE [LARGE SCALE GENOMIC DNA]</scope>
    <source>
        <strain>APS</strain>
    </source>
</reference>
<proteinExistence type="inferred from homology"/>
<keyword id="KW-0028">Amino-acid biosynthesis</keyword>
<keyword id="KW-0963">Cytoplasm</keyword>
<keyword id="KW-0315">Glutamine amidotransferase</keyword>
<keyword id="KW-0368">Histidine biosynthesis</keyword>
<keyword id="KW-0378">Hydrolase</keyword>
<keyword id="KW-0456">Lyase</keyword>
<keyword id="KW-1185">Reference proteome</keyword>